<accession>Q80UK0</accession>
<accession>Q3TLJ1</accession>
<accession>Q810W3</accession>
<accession>Q8CI09</accession>
<proteinExistence type="evidence at protein level"/>
<organism>
    <name type="scientific">Mus musculus</name>
    <name type="common">Mouse</name>
    <dbReference type="NCBI Taxonomy" id="10090"/>
    <lineage>
        <taxon>Eukaryota</taxon>
        <taxon>Metazoa</taxon>
        <taxon>Chordata</taxon>
        <taxon>Craniata</taxon>
        <taxon>Vertebrata</taxon>
        <taxon>Euteleostomi</taxon>
        <taxon>Mammalia</taxon>
        <taxon>Eutheria</taxon>
        <taxon>Euarchontoglires</taxon>
        <taxon>Glires</taxon>
        <taxon>Rodentia</taxon>
        <taxon>Myomorpha</taxon>
        <taxon>Muroidea</taxon>
        <taxon>Muridae</taxon>
        <taxon>Murinae</taxon>
        <taxon>Mus</taxon>
        <taxon>Mus</taxon>
    </lineage>
</organism>
<name>SESD1_MOUSE</name>
<dbReference type="EMBL" id="AL772242">
    <property type="status" value="NOT_ANNOTATED_CDS"/>
    <property type="molecule type" value="Genomic_DNA"/>
</dbReference>
<dbReference type="EMBL" id="BC038005">
    <property type="protein sequence ID" value="AAH38005.1"/>
    <property type="molecule type" value="mRNA"/>
</dbReference>
<dbReference type="EMBL" id="BC044853">
    <property type="protein sequence ID" value="AAH44853.1"/>
    <property type="molecule type" value="mRNA"/>
</dbReference>
<dbReference type="EMBL" id="BC048358">
    <property type="protein sequence ID" value="AAH48358.1"/>
    <property type="molecule type" value="mRNA"/>
</dbReference>
<dbReference type="EMBL" id="AK166483">
    <property type="protein sequence ID" value="BAE38801.1"/>
    <property type="molecule type" value="mRNA"/>
</dbReference>
<dbReference type="CCDS" id="CCDS16163.1"/>
<dbReference type="RefSeq" id="NP_780674.1">
    <property type="nucleotide sequence ID" value="NM_175465.6"/>
</dbReference>
<dbReference type="RefSeq" id="XP_006499263.1">
    <property type="nucleotide sequence ID" value="XM_006499200.3"/>
</dbReference>
<dbReference type="RefSeq" id="XP_006499264.1">
    <property type="nucleotide sequence ID" value="XM_006499201.2"/>
</dbReference>
<dbReference type="RefSeq" id="XP_006499265.1">
    <property type="nucleotide sequence ID" value="XM_006499202.3"/>
</dbReference>
<dbReference type="RefSeq" id="XP_030106040.1">
    <property type="nucleotide sequence ID" value="XM_030250180.2"/>
</dbReference>
<dbReference type="RefSeq" id="XP_030106041.1">
    <property type="nucleotide sequence ID" value="XM_030250181.2"/>
</dbReference>
<dbReference type="RefSeq" id="XP_036017034.1">
    <property type="nucleotide sequence ID" value="XM_036161141.1"/>
</dbReference>
<dbReference type="SMR" id="Q80UK0"/>
<dbReference type="BioGRID" id="230712">
    <property type="interactions" value="8"/>
</dbReference>
<dbReference type="FunCoup" id="Q80UK0">
    <property type="interactions" value="484"/>
</dbReference>
<dbReference type="IntAct" id="Q80UK0">
    <property type="interactions" value="7"/>
</dbReference>
<dbReference type="STRING" id="10090.ENSMUSP00000099721"/>
<dbReference type="GlyGen" id="Q80UK0">
    <property type="glycosylation" value="3 sites, 1 O-linked glycan (3 sites)"/>
</dbReference>
<dbReference type="iPTMnet" id="Q80UK0"/>
<dbReference type="PhosphoSitePlus" id="Q80UK0"/>
<dbReference type="jPOST" id="Q80UK0"/>
<dbReference type="PaxDb" id="10090-ENSMUSP00000099720"/>
<dbReference type="PeptideAtlas" id="Q80UK0"/>
<dbReference type="ProteomicsDB" id="255392"/>
<dbReference type="Pumba" id="Q80UK0"/>
<dbReference type="Antibodypedia" id="47625">
    <property type="antibodies" value="133 antibodies from 23 providers"/>
</dbReference>
<dbReference type="DNASU" id="228071"/>
<dbReference type="Ensembl" id="ENSMUST00000102659.2">
    <property type="protein sequence ID" value="ENSMUSP00000099720.2"/>
    <property type="gene ID" value="ENSMUSG00000042272.18"/>
</dbReference>
<dbReference type="Ensembl" id="ENSMUST00000102660.8">
    <property type="protein sequence ID" value="ENSMUSP00000099721.2"/>
    <property type="gene ID" value="ENSMUSG00000042272.18"/>
</dbReference>
<dbReference type="GeneID" id="228071"/>
<dbReference type="KEGG" id="mmu:228071"/>
<dbReference type="UCSC" id="uc008kfx.3">
    <property type="organism name" value="mouse"/>
</dbReference>
<dbReference type="AGR" id="MGI:1916262"/>
<dbReference type="CTD" id="91404"/>
<dbReference type="MGI" id="MGI:1916262">
    <property type="gene designation" value="Sestd1"/>
</dbReference>
<dbReference type="VEuPathDB" id="HostDB:ENSMUSG00000042272"/>
<dbReference type="eggNOG" id="KOG4240">
    <property type="taxonomic scope" value="Eukaryota"/>
</dbReference>
<dbReference type="GeneTree" id="ENSGT00730000111148"/>
<dbReference type="HOGENOM" id="CLU_010440_1_0_1"/>
<dbReference type="InParanoid" id="Q80UK0"/>
<dbReference type="OMA" id="PDAFWDK"/>
<dbReference type="OrthoDB" id="5859883at2759"/>
<dbReference type="PhylomeDB" id="Q80UK0"/>
<dbReference type="TreeFam" id="TF332003"/>
<dbReference type="BioGRID-ORCS" id="228071">
    <property type="hits" value="4 hits in 74 CRISPR screens"/>
</dbReference>
<dbReference type="ChiTaRS" id="Sestd1">
    <property type="organism name" value="mouse"/>
</dbReference>
<dbReference type="PRO" id="PR:Q80UK0"/>
<dbReference type="Proteomes" id="UP000000589">
    <property type="component" value="Chromosome 2"/>
</dbReference>
<dbReference type="RNAct" id="Q80UK0">
    <property type="molecule type" value="protein"/>
</dbReference>
<dbReference type="Bgee" id="ENSMUSG00000042272">
    <property type="expression patterns" value="Expressed in otolith organ and 232 other cell types or tissues"/>
</dbReference>
<dbReference type="GO" id="GO:0034704">
    <property type="term" value="C:calcium channel complex"/>
    <property type="evidence" value="ECO:0007669"/>
    <property type="project" value="Ensembl"/>
</dbReference>
<dbReference type="GO" id="GO:0045111">
    <property type="term" value="C:intermediate filament cytoskeleton"/>
    <property type="evidence" value="ECO:0007669"/>
    <property type="project" value="Ensembl"/>
</dbReference>
<dbReference type="GO" id="GO:0070300">
    <property type="term" value="F:phosphatidic acid binding"/>
    <property type="evidence" value="ECO:0007669"/>
    <property type="project" value="Ensembl"/>
</dbReference>
<dbReference type="GO" id="GO:0043325">
    <property type="term" value="F:phosphatidylinositol-3,4-bisphosphate binding"/>
    <property type="evidence" value="ECO:0007669"/>
    <property type="project" value="Ensembl"/>
</dbReference>
<dbReference type="GO" id="GO:0080025">
    <property type="term" value="F:phosphatidylinositol-3,5-bisphosphate binding"/>
    <property type="evidence" value="ECO:0007669"/>
    <property type="project" value="Ensembl"/>
</dbReference>
<dbReference type="GO" id="GO:0032266">
    <property type="term" value="F:phosphatidylinositol-3-phosphate binding"/>
    <property type="evidence" value="ECO:0007669"/>
    <property type="project" value="Ensembl"/>
</dbReference>
<dbReference type="GO" id="GO:0005546">
    <property type="term" value="F:phosphatidylinositol-4,5-bisphosphate binding"/>
    <property type="evidence" value="ECO:0007669"/>
    <property type="project" value="Ensembl"/>
</dbReference>
<dbReference type="GO" id="GO:0070273">
    <property type="term" value="F:phosphatidylinositol-4-phosphate binding"/>
    <property type="evidence" value="ECO:0007669"/>
    <property type="project" value="Ensembl"/>
</dbReference>
<dbReference type="GO" id="GO:0010314">
    <property type="term" value="F:phosphatidylinositol-5-phosphate binding"/>
    <property type="evidence" value="ECO:0007669"/>
    <property type="project" value="Ensembl"/>
</dbReference>
<dbReference type="GO" id="GO:1904878">
    <property type="term" value="P:negative regulation of calcium ion transmembrane transport via high voltage-gated calcium channel"/>
    <property type="evidence" value="ECO:0007669"/>
    <property type="project" value="Ensembl"/>
</dbReference>
<dbReference type="FunFam" id="1.20.58.60:FF:000124">
    <property type="entry name" value="SEC14 domain and spectrin repeat-containing protein 1"/>
    <property type="match status" value="1"/>
</dbReference>
<dbReference type="FunFam" id="1.20.58.60:FF:000187">
    <property type="entry name" value="SEC14 domain and spectrin repeat-containing protein 1 isoform X2"/>
    <property type="match status" value="1"/>
</dbReference>
<dbReference type="Gene3D" id="1.20.58.60">
    <property type="match status" value="2"/>
</dbReference>
<dbReference type="InterPro" id="IPR001251">
    <property type="entry name" value="CRAL-TRIO_dom"/>
</dbReference>
<dbReference type="InterPro" id="IPR056804">
    <property type="entry name" value="Spectrin_SESTD1"/>
</dbReference>
<dbReference type="PANTHER" id="PTHR46607">
    <property type="entry name" value="SEC14 DOMAIN AND SPECTRIN REPEAT-CONTAINING PROTEIN 1"/>
    <property type="match status" value="1"/>
</dbReference>
<dbReference type="PANTHER" id="PTHR46607:SF1">
    <property type="entry name" value="SEC14 DOMAIN AND SPECTRIN REPEAT-CONTAINING PROTEIN 1"/>
    <property type="match status" value="1"/>
</dbReference>
<dbReference type="Pfam" id="PF13716">
    <property type="entry name" value="CRAL_TRIO_2"/>
    <property type="match status" value="1"/>
</dbReference>
<dbReference type="Pfam" id="PF24915">
    <property type="entry name" value="Spectrin_SESTD1"/>
    <property type="match status" value="1"/>
</dbReference>
<dbReference type="SUPFAM" id="SSF46966">
    <property type="entry name" value="Spectrin repeat"/>
    <property type="match status" value="1"/>
</dbReference>
<dbReference type="PROSITE" id="PS50191">
    <property type="entry name" value="CRAL_TRIO"/>
    <property type="match status" value="1"/>
</dbReference>
<reference key="1">
    <citation type="journal article" date="2009" name="PLoS Biol.">
        <title>Lineage-specific biology revealed by a finished genome assembly of the mouse.</title>
        <authorList>
            <person name="Church D.M."/>
            <person name="Goodstadt L."/>
            <person name="Hillier L.W."/>
            <person name="Zody M.C."/>
            <person name="Goldstein S."/>
            <person name="She X."/>
            <person name="Bult C.J."/>
            <person name="Agarwala R."/>
            <person name="Cherry J.L."/>
            <person name="DiCuccio M."/>
            <person name="Hlavina W."/>
            <person name="Kapustin Y."/>
            <person name="Meric P."/>
            <person name="Maglott D."/>
            <person name="Birtle Z."/>
            <person name="Marques A.C."/>
            <person name="Graves T."/>
            <person name="Zhou S."/>
            <person name="Teague B."/>
            <person name="Potamousis K."/>
            <person name="Churas C."/>
            <person name="Place M."/>
            <person name="Herschleb J."/>
            <person name="Runnheim R."/>
            <person name="Forrest D."/>
            <person name="Amos-Landgraf J."/>
            <person name="Schwartz D.C."/>
            <person name="Cheng Z."/>
            <person name="Lindblad-Toh K."/>
            <person name="Eichler E.E."/>
            <person name="Ponting C.P."/>
        </authorList>
    </citation>
    <scope>NUCLEOTIDE SEQUENCE [LARGE SCALE GENOMIC DNA]</scope>
    <source>
        <strain>C57BL/6J</strain>
    </source>
</reference>
<reference key="2">
    <citation type="journal article" date="2004" name="Genome Res.">
        <title>The status, quality, and expansion of the NIH full-length cDNA project: the Mammalian Gene Collection (MGC).</title>
        <authorList>
            <consortium name="The MGC Project Team"/>
        </authorList>
    </citation>
    <scope>NUCLEOTIDE SEQUENCE [LARGE SCALE MRNA]</scope>
    <source>
        <strain>FVB/N</strain>
        <tissue>Mammary tumor</tissue>
    </source>
</reference>
<reference key="3">
    <citation type="journal article" date="2005" name="Science">
        <title>The transcriptional landscape of the mammalian genome.</title>
        <authorList>
            <person name="Carninci P."/>
            <person name="Kasukawa T."/>
            <person name="Katayama S."/>
            <person name="Gough J."/>
            <person name="Frith M.C."/>
            <person name="Maeda N."/>
            <person name="Oyama R."/>
            <person name="Ravasi T."/>
            <person name="Lenhard B."/>
            <person name="Wells C."/>
            <person name="Kodzius R."/>
            <person name="Shimokawa K."/>
            <person name="Bajic V.B."/>
            <person name="Brenner S.E."/>
            <person name="Batalov S."/>
            <person name="Forrest A.R."/>
            <person name="Zavolan M."/>
            <person name="Davis M.J."/>
            <person name="Wilming L.G."/>
            <person name="Aidinis V."/>
            <person name="Allen J.E."/>
            <person name="Ambesi-Impiombato A."/>
            <person name="Apweiler R."/>
            <person name="Aturaliya R.N."/>
            <person name="Bailey T.L."/>
            <person name="Bansal M."/>
            <person name="Baxter L."/>
            <person name="Beisel K.W."/>
            <person name="Bersano T."/>
            <person name="Bono H."/>
            <person name="Chalk A.M."/>
            <person name="Chiu K.P."/>
            <person name="Choudhary V."/>
            <person name="Christoffels A."/>
            <person name="Clutterbuck D.R."/>
            <person name="Crowe M.L."/>
            <person name="Dalla E."/>
            <person name="Dalrymple B.P."/>
            <person name="de Bono B."/>
            <person name="Della Gatta G."/>
            <person name="di Bernardo D."/>
            <person name="Down T."/>
            <person name="Engstrom P."/>
            <person name="Fagiolini M."/>
            <person name="Faulkner G."/>
            <person name="Fletcher C.F."/>
            <person name="Fukushima T."/>
            <person name="Furuno M."/>
            <person name="Futaki S."/>
            <person name="Gariboldi M."/>
            <person name="Georgii-Hemming P."/>
            <person name="Gingeras T.R."/>
            <person name="Gojobori T."/>
            <person name="Green R.E."/>
            <person name="Gustincich S."/>
            <person name="Harbers M."/>
            <person name="Hayashi Y."/>
            <person name="Hensch T.K."/>
            <person name="Hirokawa N."/>
            <person name="Hill D."/>
            <person name="Huminiecki L."/>
            <person name="Iacono M."/>
            <person name="Ikeo K."/>
            <person name="Iwama A."/>
            <person name="Ishikawa T."/>
            <person name="Jakt M."/>
            <person name="Kanapin A."/>
            <person name="Katoh M."/>
            <person name="Kawasawa Y."/>
            <person name="Kelso J."/>
            <person name="Kitamura H."/>
            <person name="Kitano H."/>
            <person name="Kollias G."/>
            <person name="Krishnan S.P."/>
            <person name="Kruger A."/>
            <person name="Kummerfeld S.K."/>
            <person name="Kurochkin I.V."/>
            <person name="Lareau L.F."/>
            <person name="Lazarevic D."/>
            <person name="Lipovich L."/>
            <person name="Liu J."/>
            <person name="Liuni S."/>
            <person name="McWilliam S."/>
            <person name="Madan Babu M."/>
            <person name="Madera M."/>
            <person name="Marchionni L."/>
            <person name="Matsuda H."/>
            <person name="Matsuzawa S."/>
            <person name="Miki H."/>
            <person name="Mignone F."/>
            <person name="Miyake S."/>
            <person name="Morris K."/>
            <person name="Mottagui-Tabar S."/>
            <person name="Mulder N."/>
            <person name="Nakano N."/>
            <person name="Nakauchi H."/>
            <person name="Ng P."/>
            <person name="Nilsson R."/>
            <person name="Nishiguchi S."/>
            <person name="Nishikawa S."/>
            <person name="Nori F."/>
            <person name="Ohara O."/>
            <person name="Okazaki Y."/>
            <person name="Orlando V."/>
            <person name="Pang K.C."/>
            <person name="Pavan W.J."/>
            <person name="Pavesi G."/>
            <person name="Pesole G."/>
            <person name="Petrovsky N."/>
            <person name="Piazza S."/>
            <person name="Reed J."/>
            <person name="Reid J.F."/>
            <person name="Ring B.Z."/>
            <person name="Ringwald M."/>
            <person name="Rost B."/>
            <person name="Ruan Y."/>
            <person name="Salzberg S.L."/>
            <person name="Sandelin A."/>
            <person name="Schneider C."/>
            <person name="Schoenbach C."/>
            <person name="Sekiguchi K."/>
            <person name="Semple C.A."/>
            <person name="Seno S."/>
            <person name="Sessa L."/>
            <person name="Sheng Y."/>
            <person name="Shibata Y."/>
            <person name="Shimada H."/>
            <person name="Shimada K."/>
            <person name="Silva D."/>
            <person name="Sinclair B."/>
            <person name="Sperling S."/>
            <person name="Stupka E."/>
            <person name="Sugiura K."/>
            <person name="Sultana R."/>
            <person name="Takenaka Y."/>
            <person name="Taki K."/>
            <person name="Tammoja K."/>
            <person name="Tan S.L."/>
            <person name="Tang S."/>
            <person name="Taylor M.S."/>
            <person name="Tegner J."/>
            <person name="Teichmann S.A."/>
            <person name="Ueda H.R."/>
            <person name="van Nimwegen E."/>
            <person name="Verardo R."/>
            <person name="Wei C.L."/>
            <person name="Yagi K."/>
            <person name="Yamanishi H."/>
            <person name="Zabarovsky E."/>
            <person name="Zhu S."/>
            <person name="Zimmer A."/>
            <person name="Hide W."/>
            <person name="Bult C."/>
            <person name="Grimmond S.M."/>
            <person name="Teasdale R.D."/>
            <person name="Liu E.T."/>
            <person name="Brusic V."/>
            <person name="Quackenbush J."/>
            <person name="Wahlestedt C."/>
            <person name="Mattick J.S."/>
            <person name="Hume D.A."/>
            <person name="Kai C."/>
            <person name="Sasaki D."/>
            <person name="Tomaru Y."/>
            <person name="Fukuda S."/>
            <person name="Kanamori-Katayama M."/>
            <person name="Suzuki M."/>
            <person name="Aoki J."/>
            <person name="Arakawa T."/>
            <person name="Iida J."/>
            <person name="Imamura K."/>
            <person name="Itoh M."/>
            <person name="Kato T."/>
            <person name="Kawaji H."/>
            <person name="Kawagashira N."/>
            <person name="Kawashima T."/>
            <person name="Kojima M."/>
            <person name="Kondo S."/>
            <person name="Konno H."/>
            <person name="Nakano K."/>
            <person name="Ninomiya N."/>
            <person name="Nishio T."/>
            <person name="Okada M."/>
            <person name="Plessy C."/>
            <person name="Shibata K."/>
            <person name="Shiraki T."/>
            <person name="Suzuki S."/>
            <person name="Tagami M."/>
            <person name="Waki K."/>
            <person name="Watahiki A."/>
            <person name="Okamura-Oho Y."/>
            <person name="Suzuki H."/>
            <person name="Kawai J."/>
            <person name="Hayashizaki Y."/>
        </authorList>
    </citation>
    <scope>NUCLEOTIDE SEQUENCE [LARGE SCALE MRNA] OF 498-696</scope>
    <source>
        <tissue>Mammary gland</tissue>
    </source>
</reference>
<reference key="4">
    <citation type="journal article" date="2010" name="Cell">
        <title>A tissue-specific atlas of mouse protein phosphorylation and expression.</title>
        <authorList>
            <person name="Huttlin E.L."/>
            <person name="Jedrychowski M.P."/>
            <person name="Elias J.E."/>
            <person name="Goswami T."/>
            <person name="Rad R."/>
            <person name="Beausoleil S.A."/>
            <person name="Villen J."/>
            <person name="Haas W."/>
            <person name="Sowa M.E."/>
            <person name="Gygi S.P."/>
        </authorList>
    </citation>
    <scope>IDENTIFICATION BY MASS SPECTROMETRY [LARGE SCALE ANALYSIS]</scope>
    <source>
        <tissue>Brain</tissue>
        <tissue>Lung</tissue>
    </source>
</reference>
<protein>
    <recommendedName>
        <fullName>SEC14 domain and spectrin repeat-containing protein 1</fullName>
    </recommendedName>
    <alternativeName>
        <fullName>Huntingtin-interacting protein-like protein</fullName>
    </alternativeName>
</protein>
<keyword id="KW-1185">Reference proteome</keyword>
<keyword id="KW-0677">Repeat</keyword>
<feature type="chain" id="PRO_0000309480" description="SEC14 domain and spectrin repeat-containing protein 1">
    <location>
        <begin position="1"/>
        <end position="696"/>
    </location>
</feature>
<feature type="domain" description="CRAL-TRIO" evidence="2">
    <location>
        <begin position="1"/>
        <end position="153"/>
    </location>
</feature>
<feature type="repeat" description="Spectrin 1">
    <location>
        <begin position="275"/>
        <end position="378"/>
    </location>
</feature>
<feature type="repeat" description="Spectrin 2">
    <location>
        <begin position="381"/>
        <end position="494"/>
    </location>
</feature>
<feature type="repeat" description="Spectrin 3">
    <location>
        <begin position="500"/>
        <end position="602"/>
    </location>
</feature>
<feature type="sequence conflict" description="In Ref. 1; AAH38005." evidence="3" ref="1">
    <original>QRC</original>
    <variation>HAS</variation>
    <location>
        <begin position="480"/>
        <end position="482"/>
    </location>
</feature>
<comment type="function">
    <text evidence="1">May act as the primary docking protein directing membrane turnover and assembly of the transient receptor potential channels TRPC4 and TRPC5. Binds phospholipids such as phosphatidylinositol monophosphates, phosphatidylinositol diphosphates (PIP2s) and phosphatidic acid, but not less polar lipids including phosphatidylcholine, phosphatidylserine, and phosphatidylinositol. The binding to PIP2s is calcium dependent. Might be involved in the plasma membrane localization of CTNNB1 (By similarity).</text>
</comment>
<comment type="subunit">
    <text evidence="1">Interacts (via the spectrin 1 repeat) with TRPC4 and TRPC5 (via CIRB domain). Interacts with CTNNB1.</text>
</comment>
<comment type="similarity">
    <text evidence="3">Belongs to the SOLO family.</text>
</comment>
<evidence type="ECO:0000250" key="1"/>
<evidence type="ECO:0000255" key="2">
    <source>
        <dbReference type="PROSITE-ProRule" id="PRU00056"/>
    </source>
</evidence>
<evidence type="ECO:0000305" key="3"/>
<sequence>MEASVILPILKKKLAFLSGGKDRRSGLILTIPLCLEQTSMDELSVTLDYLLSIPSEKCKARGFTVIVDGRKSQWNVVKTVVLMLQNVVPAEVSLVCVVKPDEFWDKKVTHFCFWKEKDRLGFEVILVSANKLTRYIEPCQLTEDFGGSLTYDHMDWLNKRLVFEKFTKESTSLLDELALINNGSDKGNEQEKERSVDLNFLPSVDPETVLQTGHELLSELQQRRFNGSDGGVSWSPMDDELLAQPQVMKLLDSLREQYTRYQEVCRQRSKRTQLEEIQQKVMQVVNWLEGPGSEQLRAQWGIGDSIRASQALQQKHEEIESQHSEWFAVYVELNQQIAALLNAGDEEDLVELKSLQQQLSDVCYRQASQLEFRQNLLQAALEFHGVAQDLSQQLDGLLGMLCVDVAPADGASIQQTLKLLEEKLKSVDVGLQGLREKGQGLLDQISNQASWAYGKDVTIENKENVDHIQGVMEDMQLRKQRCEDMVDVRRLKMLQMVQLFKCEEDASQAVEWLSELLDALLKTHIRLGDDAQETKVLLEKHRKFVDVAQSTYDYGRQLLQATVVLCQSLRCTSRSSGDTLPRLNRVWKQFTVASEERVHRLEMAIAFHSNAEKILQDCPEEPEAMNDEEQFEEIEAIGKSLLDRLTIPVVYPDGTEQYFGSPSDMASTAEHIRDRMKLVSLKRQQLRHPELVTTES</sequence>
<gene>
    <name type="primary">Sestd1</name>
</gene>